<keyword id="KW-0028">Amino-acid biosynthesis</keyword>
<keyword id="KW-0057">Aromatic amino acid biosynthesis</keyword>
<keyword id="KW-0456">Lyase</keyword>
<keyword id="KW-1185">Reference proteome</keyword>
<keyword id="KW-0822">Tryptophan biosynthesis</keyword>
<sequence>MSKLFIPYIMGDLNFIHHLKTLTENGADIVEIGVPFSDPVADGPIIMKAGRNAIDEGSNIKFIFDELIKNKNTISSKYVLMTYYNILSAYGEELFLDKCDEAGVYGLIIPDLPYELTKKFKKDFYHHSVKIISLIAMTASDARIMQIAKNSEGFIYTVTMNATTGNSGEFHPDLKRKIEYIKKVSKIPVVAGFGIKNPEHVKDIASVADGIVIGSEIVKRIEIDSRKEFITYIKSIRTTLNSL</sequence>
<accession>Q5HPG9</accession>
<gene>
    <name evidence="1" type="primary">trpA</name>
    <name type="ordered locus">SERP0943</name>
</gene>
<comment type="function">
    <text evidence="1">The alpha subunit is responsible for the aldol cleavage of indoleglycerol phosphate to indole and glyceraldehyde 3-phosphate.</text>
</comment>
<comment type="catalytic activity">
    <reaction evidence="1">
        <text>(1S,2R)-1-C-(indol-3-yl)glycerol 3-phosphate + L-serine = D-glyceraldehyde 3-phosphate + L-tryptophan + H2O</text>
        <dbReference type="Rhea" id="RHEA:10532"/>
        <dbReference type="ChEBI" id="CHEBI:15377"/>
        <dbReference type="ChEBI" id="CHEBI:33384"/>
        <dbReference type="ChEBI" id="CHEBI:57912"/>
        <dbReference type="ChEBI" id="CHEBI:58866"/>
        <dbReference type="ChEBI" id="CHEBI:59776"/>
        <dbReference type="EC" id="4.2.1.20"/>
    </reaction>
</comment>
<comment type="pathway">
    <text evidence="1">Amino-acid biosynthesis; L-tryptophan biosynthesis; L-tryptophan from chorismate: step 5/5.</text>
</comment>
<comment type="subunit">
    <text evidence="1">Tetramer of two alpha and two beta chains.</text>
</comment>
<comment type="similarity">
    <text evidence="1">Belongs to the TrpA family.</text>
</comment>
<proteinExistence type="inferred from homology"/>
<dbReference type="EC" id="4.2.1.20" evidence="1"/>
<dbReference type="EMBL" id="CP000029">
    <property type="protein sequence ID" value="AAW54340.1"/>
    <property type="molecule type" value="Genomic_DNA"/>
</dbReference>
<dbReference type="RefSeq" id="WP_002456200.1">
    <property type="nucleotide sequence ID" value="NC_002976.3"/>
</dbReference>
<dbReference type="SMR" id="Q5HPG9"/>
<dbReference type="STRING" id="176279.SERP0943"/>
<dbReference type="GeneID" id="50018819"/>
<dbReference type="KEGG" id="ser:SERP0943"/>
<dbReference type="eggNOG" id="COG0159">
    <property type="taxonomic scope" value="Bacteria"/>
</dbReference>
<dbReference type="HOGENOM" id="CLU_016734_0_0_9"/>
<dbReference type="UniPathway" id="UPA00035">
    <property type="reaction ID" value="UER00044"/>
</dbReference>
<dbReference type="Proteomes" id="UP000000531">
    <property type="component" value="Chromosome"/>
</dbReference>
<dbReference type="GO" id="GO:0005829">
    <property type="term" value="C:cytosol"/>
    <property type="evidence" value="ECO:0007669"/>
    <property type="project" value="TreeGrafter"/>
</dbReference>
<dbReference type="GO" id="GO:0004834">
    <property type="term" value="F:tryptophan synthase activity"/>
    <property type="evidence" value="ECO:0007669"/>
    <property type="project" value="UniProtKB-UniRule"/>
</dbReference>
<dbReference type="CDD" id="cd04724">
    <property type="entry name" value="Tryptophan_synthase_alpha"/>
    <property type="match status" value="1"/>
</dbReference>
<dbReference type="Gene3D" id="3.20.20.70">
    <property type="entry name" value="Aldolase class I"/>
    <property type="match status" value="1"/>
</dbReference>
<dbReference type="HAMAP" id="MF_00131">
    <property type="entry name" value="Trp_synth_alpha"/>
    <property type="match status" value="1"/>
</dbReference>
<dbReference type="InterPro" id="IPR013785">
    <property type="entry name" value="Aldolase_TIM"/>
</dbReference>
<dbReference type="InterPro" id="IPR011060">
    <property type="entry name" value="RibuloseP-bd_barrel"/>
</dbReference>
<dbReference type="InterPro" id="IPR018204">
    <property type="entry name" value="Trp_synthase_alpha_AS"/>
</dbReference>
<dbReference type="InterPro" id="IPR002028">
    <property type="entry name" value="Trp_synthase_suA"/>
</dbReference>
<dbReference type="NCBIfam" id="TIGR00262">
    <property type="entry name" value="trpA"/>
    <property type="match status" value="1"/>
</dbReference>
<dbReference type="PANTHER" id="PTHR43406:SF1">
    <property type="entry name" value="TRYPTOPHAN SYNTHASE ALPHA CHAIN, CHLOROPLASTIC"/>
    <property type="match status" value="1"/>
</dbReference>
<dbReference type="PANTHER" id="PTHR43406">
    <property type="entry name" value="TRYPTOPHAN SYNTHASE, ALPHA CHAIN"/>
    <property type="match status" value="1"/>
</dbReference>
<dbReference type="Pfam" id="PF00290">
    <property type="entry name" value="Trp_syntA"/>
    <property type="match status" value="1"/>
</dbReference>
<dbReference type="SUPFAM" id="SSF51366">
    <property type="entry name" value="Ribulose-phoshate binding barrel"/>
    <property type="match status" value="1"/>
</dbReference>
<dbReference type="PROSITE" id="PS00167">
    <property type="entry name" value="TRP_SYNTHASE_ALPHA"/>
    <property type="match status" value="1"/>
</dbReference>
<organism>
    <name type="scientific">Staphylococcus epidermidis (strain ATCC 35984 / DSM 28319 / BCRC 17069 / CCUG 31568 / BM 3577 / RP62A)</name>
    <dbReference type="NCBI Taxonomy" id="176279"/>
    <lineage>
        <taxon>Bacteria</taxon>
        <taxon>Bacillati</taxon>
        <taxon>Bacillota</taxon>
        <taxon>Bacilli</taxon>
        <taxon>Bacillales</taxon>
        <taxon>Staphylococcaceae</taxon>
        <taxon>Staphylococcus</taxon>
    </lineage>
</organism>
<protein>
    <recommendedName>
        <fullName evidence="1">Tryptophan synthase alpha chain</fullName>
        <ecNumber evidence="1">4.2.1.20</ecNumber>
    </recommendedName>
</protein>
<reference key="1">
    <citation type="journal article" date="2005" name="J. Bacteriol.">
        <title>Insights on evolution of virulence and resistance from the complete genome analysis of an early methicillin-resistant Staphylococcus aureus strain and a biofilm-producing methicillin-resistant Staphylococcus epidermidis strain.</title>
        <authorList>
            <person name="Gill S.R."/>
            <person name="Fouts D.E."/>
            <person name="Archer G.L."/>
            <person name="Mongodin E.F."/>
            <person name="DeBoy R.T."/>
            <person name="Ravel J."/>
            <person name="Paulsen I.T."/>
            <person name="Kolonay J.F."/>
            <person name="Brinkac L.M."/>
            <person name="Beanan M.J."/>
            <person name="Dodson R.J."/>
            <person name="Daugherty S.C."/>
            <person name="Madupu R."/>
            <person name="Angiuoli S.V."/>
            <person name="Durkin A.S."/>
            <person name="Haft D.H."/>
            <person name="Vamathevan J.J."/>
            <person name="Khouri H."/>
            <person name="Utterback T.R."/>
            <person name="Lee C."/>
            <person name="Dimitrov G."/>
            <person name="Jiang L."/>
            <person name="Qin H."/>
            <person name="Weidman J."/>
            <person name="Tran K."/>
            <person name="Kang K.H."/>
            <person name="Hance I.R."/>
            <person name="Nelson K.E."/>
            <person name="Fraser C.M."/>
        </authorList>
    </citation>
    <scope>NUCLEOTIDE SEQUENCE [LARGE SCALE GENOMIC DNA]</scope>
    <source>
        <strain>ATCC 35984 / DSM 28319 / BCRC 17069 / CCUG 31568 / BM 3577 / RP62A</strain>
    </source>
</reference>
<name>TRPA_STAEQ</name>
<feature type="chain" id="PRO_0000098850" description="Tryptophan synthase alpha chain">
    <location>
        <begin position="1"/>
        <end position="243"/>
    </location>
</feature>
<feature type="active site" description="Proton acceptor" evidence="1">
    <location>
        <position position="31"/>
    </location>
</feature>
<feature type="active site" description="Proton acceptor" evidence="1">
    <location>
        <position position="42"/>
    </location>
</feature>
<evidence type="ECO:0000255" key="1">
    <source>
        <dbReference type="HAMAP-Rule" id="MF_00131"/>
    </source>
</evidence>